<comment type="function">
    <text evidence="1">Acts as an anti-CsrA protein, binds CsrA and prevents it from repressing translation of its target genes, one of which is flagellin. Binds to flagellin and participates in the assembly of the flagellum.</text>
</comment>
<comment type="subunit">
    <text evidence="1">Interacts with translational regulator CsrA and flagellin(s).</text>
</comment>
<comment type="subcellular location">
    <subcellularLocation>
        <location evidence="1">Cytoplasm</location>
    </subcellularLocation>
</comment>
<comment type="similarity">
    <text evidence="1">Belongs to the FliW family.</text>
</comment>
<dbReference type="EMBL" id="CP000048">
    <property type="protein sequence ID" value="AAX16700.1"/>
    <property type="molecule type" value="Genomic_DNA"/>
</dbReference>
<dbReference type="RefSeq" id="WP_012421957.1">
    <property type="nucleotide sequence ID" value="NZ_CP073136.1"/>
</dbReference>
<dbReference type="SMR" id="B2RZP4"/>
<dbReference type="GeneID" id="71842990"/>
<dbReference type="KEGG" id="bhr:BH0183"/>
<dbReference type="HOGENOM" id="CLU_112356_0_2_12"/>
<dbReference type="Proteomes" id="UP000008834">
    <property type="component" value="Chromosome"/>
</dbReference>
<dbReference type="GO" id="GO:0005737">
    <property type="term" value="C:cytoplasm"/>
    <property type="evidence" value="ECO:0007669"/>
    <property type="project" value="UniProtKB-SubCell"/>
</dbReference>
<dbReference type="GO" id="GO:0044780">
    <property type="term" value="P:bacterial-type flagellum assembly"/>
    <property type="evidence" value="ECO:0007669"/>
    <property type="project" value="UniProtKB-UniRule"/>
</dbReference>
<dbReference type="GO" id="GO:0006417">
    <property type="term" value="P:regulation of translation"/>
    <property type="evidence" value="ECO:0007669"/>
    <property type="project" value="UniProtKB-KW"/>
</dbReference>
<dbReference type="Gene3D" id="2.30.290.10">
    <property type="entry name" value="BH3618-like"/>
    <property type="match status" value="1"/>
</dbReference>
<dbReference type="HAMAP" id="MF_01185">
    <property type="entry name" value="FliW"/>
    <property type="match status" value="1"/>
</dbReference>
<dbReference type="InterPro" id="IPR003775">
    <property type="entry name" value="Flagellar_assembly_factor_FliW"/>
</dbReference>
<dbReference type="InterPro" id="IPR024046">
    <property type="entry name" value="Flagellar_assmbl_FliW_dom_sf"/>
</dbReference>
<dbReference type="NCBIfam" id="NF009793">
    <property type="entry name" value="PRK13285.1-1"/>
    <property type="match status" value="1"/>
</dbReference>
<dbReference type="PANTHER" id="PTHR39190">
    <property type="entry name" value="FLAGELLAR ASSEMBLY FACTOR FLIW"/>
    <property type="match status" value="1"/>
</dbReference>
<dbReference type="PANTHER" id="PTHR39190:SF1">
    <property type="entry name" value="FLAGELLAR ASSEMBLY FACTOR FLIW"/>
    <property type="match status" value="1"/>
</dbReference>
<dbReference type="Pfam" id="PF02623">
    <property type="entry name" value="FliW"/>
    <property type="match status" value="1"/>
</dbReference>
<dbReference type="SUPFAM" id="SSF141457">
    <property type="entry name" value="BH3618-like"/>
    <property type="match status" value="1"/>
</dbReference>
<accession>B2RZP4</accession>
<proteinExistence type="inferred from homology"/>
<gene>
    <name evidence="1" type="primary">fliW</name>
    <name type="ordered locus">BH0183</name>
</gene>
<organism>
    <name type="scientific">Borrelia hermsii (strain HS1 / DAH)</name>
    <dbReference type="NCBI Taxonomy" id="314723"/>
    <lineage>
        <taxon>Bacteria</taxon>
        <taxon>Pseudomonadati</taxon>
        <taxon>Spirochaetota</taxon>
        <taxon>Spirochaetia</taxon>
        <taxon>Spirochaetales</taxon>
        <taxon>Borreliaceae</taxon>
        <taxon>Borrelia</taxon>
    </lineage>
</organism>
<name>FLIW_BORHD</name>
<evidence type="ECO:0000255" key="1">
    <source>
        <dbReference type="HAMAP-Rule" id="MF_01185"/>
    </source>
</evidence>
<sequence>MKNEFSIKFNFPDGILGFEEIKEFIIKDSEYKPFSIMQSINGEINFLVTSPFNFLEKYLPNIEEKDWLDVQAENEDEKVILCIINMHVKTYKEITANLKAPIILNKKKLIGKQAISTNEEHYLRYRVFKE</sequence>
<feature type="chain" id="PRO_1000138251" description="Flagellar assembly factor FliW">
    <location>
        <begin position="1"/>
        <end position="130"/>
    </location>
</feature>
<protein>
    <recommendedName>
        <fullName evidence="1">Flagellar assembly factor FliW</fullName>
    </recommendedName>
</protein>
<keyword id="KW-1005">Bacterial flagellum biogenesis</keyword>
<keyword id="KW-0143">Chaperone</keyword>
<keyword id="KW-0963">Cytoplasm</keyword>
<keyword id="KW-0810">Translation regulation</keyword>
<reference key="1">
    <citation type="submission" date="2004-12" db="EMBL/GenBank/DDBJ databases">
        <title>The genome sequence of Borrelia hermsii and Borrelia turicatae: comparative analysis of two agents of endemic N. America relapsing fever.</title>
        <authorList>
            <person name="Porcella S.F."/>
            <person name="Raffel S.J."/>
            <person name="Schrumpf M.E."/>
            <person name="Montgomery B."/>
            <person name="Smith T."/>
            <person name="Schwan T.G."/>
        </authorList>
    </citation>
    <scope>NUCLEOTIDE SEQUENCE [LARGE SCALE GENOMIC DNA]</scope>
    <source>
        <strain>HS1 / DAH</strain>
    </source>
</reference>